<organism>
    <name type="scientific">Arabidopsis thaliana</name>
    <name type="common">Mouse-ear cress</name>
    <dbReference type="NCBI Taxonomy" id="3702"/>
    <lineage>
        <taxon>Eukaryota</taxon>
        <taxon>Viridiplantae</taxon>
        <taxon>Streptophyta</taxon>
        <taxon>Embryophyta</taxon>
        <taxon>Tracheophyta</taxon>
        <taxon>Spermatophyta</taxon>
        <taxon>Magnoliopsida</taxon>
        <taxon>eudicotyledons</taxon>
        <taxon>Gunneridae</taxon>
        <taxon>Pentapetalae</taxon>
        <taxon>rosids</taxon>
        <taxon>malvids</taxon>
        <taxon>Brassicales</taxon>
        <taxon>Brassicaceae</taxon>
        <taxon>Camelineae</taxon>
        <taxon>Arabidopsis</taxon>
    </lineage>
</organism>
<accession>Q3E922</accession>
<gene>
    <name type="ordered locus">At5g26805</name>
    <name type="ORF">F2P16</name>
</gene>
<name>Y5680_ARATH</name>
<keyword id="KW-0238">DNA-binding</keyword>
<keyword id="KW-0539">Nucleus</keyword>
<keyword id="KW-1185">Reference proteome</keyword>
<keyword id="KW-0804">Transcription</keyword>
<keyword id="KW-0805">Transcription regulation</keyword>
<comment type="subcellular location">
    <subcellularLocation>
        <location evidence="1">Nucleus</location>
    </subcellularLocation>
</comment>
<reference key="1">
    <citation type="journal article" date="2000" name="Nature">
        <title>Sequence and analysis of chromosome 5 of the plant Arabidopsis thaliana.</title>
        <authorList>
            <person name="Tabata S."/>
            <person name="Kaneko T."/>
            <person name="Nakamura Y."/>
            <person name="Kotani H."/>
            <person name="Kato T."/>
            <person name="Asamizu E."/>
            <person name="Miyajima N."/>
            <person name="Sasamoto S."/>
            <person name="Kimura T."/>
            <person name="Hosouchi T."/>
            <person name="Kawashima K."/>
            <person name="Kohara M."/>
            <person name="Matsumoto M."/>
            <person name="Matsuno A."/>
            <person name="Muraki A."/>
            <person name="Nakayama S."/>
            <person name="Nakazaki N."/>
            <person name="Naruo K."/>
            <person name="Okumura S."/>
            <person name="Shinpo S."/>
            <person name="Takeuchi C."/>
            <person name="Wada T."/>
            <person name="Watanabe A."/>
            <person name="Yamada M."/>
            <person name="Yasuda M."/>
            <person name="Sato S."/>
            <person name="de la Bastide M."/>
            <person name="Huang E."/>
            <person name="Spiegel L."/>
            <person name="Gnoj L."/>
            <person name="O'Shaughnessy A."/>
            <person name="Preston R."/>
            <person name="Habermann K."/>
            <person name="Murray J."/>
            <person name="Johnson D."/>
            <person name="Rohlfing T."/>
            <person name="Nelson J."/>
            <person name="Stoneking T."/>
            <person name="Pepin K."/>
            <person name="Spieth J."/>
            <person name="Sekhon M."/>
            <person name="Armstrong J."/>
            <person name="Becker M."/>
            <person name="Belter E."/>
            <person name="Cordum H."/>
            <person name="Cordes M."/>
            <person name="Courtney L."/>
            <person name="Courtney W."/>
            <person name="Dante M."/>
            <person name="Du H."/>
            <person name="Edwards J."/>
            <person name="Fryman J."/>
            <person name="Haakensen B."/>
            <person name="Lamar E."/>
            <person name="Latreille P."/>
            <person name="Leonard S."/>
            <person name="Meyer R."/>
            <person name="Mulvaney E."/>
            <person name="Ozersky P."/>
            <person name="Riley A."/>
            <person name="Strowmatt C."/>
            <person name="Wagner-McPherson C."/>
            <person name="Wollam A."/>
            <person name="Yoakum M."/>
            <person name="Bell M."/>
            <person name="Dedhia N."/>
            <person name="Parnell L."/>
            <person name="Shah R."/>
            <person name="Rodriguez M."/>
            <person name="Hoon See L."/>
            <person name="Vil D."/>
            <person name="Baker J."/>
            <person name="Kirchoff K."/>
            <person name="Toth K."/>
            <person name="King L."/>
            <person name="Bahret A."/>
            <person name="Miller B."/>
            <person name="Marra M.A."/>
            <person name="Martienssen R."/>
            <person name="McCombie W.R."/>
            <person name="Wilson R.K."/>
            <person name="Murphy G."/>
            <person name="Bancroft I."/>
            <person name="Volckaert G."/>
            <person name="Wambutt R."/>
            <person name="Duesterhoeft A."/>
            <person name="Stiekema W."/>
            <person name="Pohl T."/>
            <person name="Entian K.-D."/>
            <person name="Terryn N."/>
            <person name="Hartley N."/>
            <person name="Bent E."/>
            <person name="Johnson S."/>
            <person name="Langham S.-A."/>
            <person name="McCullagh B."/>
            <person name="Robben J."/>
            <person name="Grymonprez B."/>
            <person name="Zimmermann W."/>
            <person name="Ramsperger U."/>
            <person name="Wedler H."/>
            <person name="Balke K."/>
            <person name="Wedler E."/>
            <person name="Peters S."/>
            <person name="van Staveren M."/>
            <person name="Dirkse W."/>
            <person name="Mooijman P."/>
            <person name="Klein Lankhorst R."/>
            <person name="Weitzenegger T."/>
            <person name="Bothe G."/>
            <person name="Rose M."/>
            <person name="Hauf J."/>
            <person name="Berneiser S."/>
            <person name="Hempel S."/>
            <person name="Feldpausch M."/>
            <person name="Lamberth S."/>
            <person name="Villarroel R."/>
            <person name="Gielen J."/>
            <person name="Ardiles W."/>
            <person name="Bents O."/>
            <person name="Lemcke K."/>
            <person name="Kolesov G."/>
            <person name="Mayer K.F.X."/>
            <person name="Rudd S."/>
            <person name="Schoof H."/>
            <person name="Schueller C."/>
            <person name="Zaccaria P."/>
            <person name="Mewes H.-W."/>
            <person name="Bevan M."/>
            <person name="Fransz P.F."/>
        </authorList>
    </citation>
    <scope>NUCLEOTIDE SEQUENCE [LARGE SCALE GENOMIC DNA]</scope>
    <source>
        <strain>cv. Columbia</strain>
    </source>
</reference>
<reference key="2">
    <citation type="journal article" date="2017" name="Plant J.">
        <title>Araport11: a complete reannotation of the Arabidopsis thaliana reference genome.</title>
        <authorList>
            <person name="Cheng C.Y."/>
            <person name="Krishnakumar V."/>
            <person name="Chan A.P."/>
            <person name="Thibaud-Nissen F."/>
            <person name="Schobel S."/>
            <person name="Town C.D."/>
        </authorList>
    </citation>
    <scope>GENOME REANNOTATION</scope>
    <source>
        <strain>cv. Columbia</strain>
    </source>
</reference>
<reference key="3">
    <citation type="submission" date="2006-11" db="EMBL/GenBank/DDBJ databases">
        <title>Arabidopsis ORF Clones.</title>
        <authorList>
            <person name="Bautista V.R."/>
            <person name="Kim C.J."/>
            <person name="Chen H."/>
            <person name="Quinitio C."/>
            <person name="Ecker J.R."/>
        </authorList>
    </citation>
    <scope>NUCLEOTIDE SEQUENCE [LARGE SCALE MRNA]</scope>
    <source>
        <strain>cv. Columbia</strain>
    </source>
</reference>
<reference key="4">
    <citation type="journal article" date="2008" name="Trends Plant Sci.">
        <title>The plant B3 superfamily.</title>
        <authorList>
            <person name="Swaminathan K."/>
            <person name="Peterson K."/>
            <person name="Jack T."/>
        </authorList>
    </citation>
    <scope>GENE FAMILY</scope>
</reference>
<dbReference type="EMBL" id="AF007270">
    <property type="status" value="NOT_ANNOTATED_CDS"/>
    <property type="molecule type" value="Genomic_DNA"/>
</dbReference>
<dbReference type="EMBL" id="CP002688">
    <property type="protein sequence ID" value="AED93607.1"/>
    <property type="molecule type" value="Genomic_DNA"/>
</dbReference>
<dbReference type="EMBL" id="BT029433">
    <property type="protein sequence ID" value="ABK59662.1"/>
    <property type="molecule type" value="mRNA"/>
</dbReference>
<dbReference type="RefSeq" id="NP_974841.1">
    <property type="nucleotide sequence ID" value="NM_203112.1"/>
</dbReference>
<dbReference type="SMR" id="Q3E922"/>
<dbReference type="BioGRID" id="30613">
    <property type="interactions" value="1"/>
</dbReference>
<dbReference type="IntAct" id="Q3E922">
    <property type="interactions" value="1"/>
</dbReference>
<dbReference type="STRING" id="3702.Q3E922"/>
<dbReference type="PaxDb" id="3702-AT5G26805.1"/>
<dbReference type="EnsemblPlants" id="AT5G26805.1">
    <property type="protein sequence ID" value="AT5G26805.1"/>
    <property type="gene ID" value="AT5G26805"/>
</dbReference>
<dbReference type="GeneID" id="2746007"/>
<dbReference type="Gramene" id="AT5G26805.1">
    <property type="protein sequence ID" value="AT5G26805.1"/>
    <property type="gene ID" value="AT5G26805"/>
</dbReference>
<dbReference type="KEGG" id="ath:AT5G26805"/>
<dbReference type="Araport" id="AT5G26805"/>
<dbReference type="TAIR" id="AT5G26805"/>
<dbReference type="HOGENOM" id="CLU_1689129_0_0_1"/>
<dbReference type="InParanoid" id="Q3E922"/>
<dbReference type="OMA" id="GMVVGMY"/>
<dbReference type="PhylomeDB" id="Q3E922"/>
<dbReference type="PRO" id="PR:Q3E922"/>
<dbReference type="Proteomes" id="UP000006548">
    <property type="component" value="Chromosome 5"/>
</dbReference>
<dbReference type="ExpressionAtlas" id="Q3E922">
    <property type="expression patterns" value="baseline and differential"/>
</dbReference>
<dbReference type="GO" id="GO:0005634">
    <property type="term" value="C:nucleus"/>
    <property type="evidence" value="ECO:0007669"/>
    <property type="project" value="UniProtKB-SubCell"/>
</dbReference>
<dbReference type="GO" id="GO:0003677">
    <property type="term" value="F:DNA binding"/>
    <property type="evidence" value="ECO:0007669"/>
    <property type="project" value="UniProtKB-KW"/>
</dbReference>
<dbReference type="CDD" id="cd10017">
    <property type="entry name" value="B3_DNA"/>
    <property type="match status" value="1"/>
</dbReference>
<dbReference type="Gene3D" id="2.40.330.10">
    <property type="entry name" value="DNA-binding pseudobarrel domain"/>
    <property type="match status" value="1"/>
</dbReference>
<dbReference type="InterPro" id="IPR003340">
    <property type="entry name" value="B3_DNA-bd"/>
</dbReference>
<dbReference type="InterPro" id="IPR051442">
    <property type="entry name" value="B3_domain"/>
</dbReference>
<dbReference type="InterPro" id="IPR015300">
    <property type="entry name" value="DNA-bd_pseudobarrel_sf"/>
</dbReference>
<dbReference type="PANTHER" id="PTHR34269:SF5">
    <property type="entry name" value="GENOME ASSEMBLY, CHROMOSOME: A02"/>
    <property type="match status" value="1"/>
</dbReference>
<dbReference type="PANTHER" id="PTHR34269">
    <property type="entry name" value="TRANSCRIPTION FACTOR B3-DOMAIN FAMILY-RELATED"/>
    <property type="match status" value="1"/>
</dbReference>
<sequence>MIKSLFYTFLQTKHQEESNNSRDPNYPLFPQEIEIRPIAYFPWEIIKTLTTDEIISKFQLPMEKIRDTMLRHASEEDIYRTKFMSCETNILVKDLDTNTIHQGKLWKHPCENNFALRESWIEEFVKRRRLVVGMVVGMYWDFEACMFCFSVLDGRQ</sequence>
<protein>
    <recommendedName>
        <fullName>B3 domain-containing protein At5g26805</fullName>
    </recommendedName>
</protein>
<feature type="chain" id="PRO_0000412854" description="B3 domain-containing protein At5g26805">
    <location>
        <begin position="1"/>
        <end position="156"/>
    </location>
</feature>
<feature type="DNA-binding region" description="TF-B3">
    <location>
        <begin position="57"/>
        <end position="155"/>
    </location>
</feature>
<proteinExistence type="evidence at transcript level"/>
<evidence type="ECO:0000250" key="1"/>